<reference key="1">
    <citation type="journal article" date="1998" name="Science">
        <title>Genome sequence of the nematode C. elegans: a platform for investigating biology.</title>
        <authorList>
            <consortium name="The C. elegans sequencing consortium"/>
        </authorList>
    </citation>
    <scope>NUCLEOTIDE SEQUENCE [LARGE SCALE GENOMIC DNA]</scope>
    <source>
        <strain>Bristol N2</strain>
    </source>
</reference>
<evidence type="ECO:0000250" key="1"/>
<evidence type="ECO:0000250" key="2">
    <source>
        <dbReference type="UniProtKB" id="O61715"/>
    </source>
</evidence>
<evidence type="ECO:0000255" key="3">
    <source>
        <dbReference type="PROSITE-ProRule" id="PRU00351"/>
    </source>
</evidence>
<evidence type="ECO:0000256" key="4">
    <source>
        <dbReference type="SAM" id="MobiDB-lite"/>
    </source>
</evidence>
<evidence type="ECO:0000305" key="5"/>
<accession>Q23027</accession>
<feature type="chain" id="PRO_0000208507" description="Innexin-5">
    <location>
        <begin position="1"/>
        <end position="447"/>
    </location>
</feature>
<feature type="transmembrane region" description="Helical" evidence="3">
    <location>
        <begin position="30"/>
        <end position="47"/>
    </location>
</feature>
<feature type="transmembrane region" description="Helical" evidence="3">
    <location>
        <begin position="108"/>
        <end position="128"/>
    </location>
</feature>
<feature type="transmembrane region" description="Helical" evidence="3">
    <location>
        <begin position="198"/>
        <end position="218"/>
    </location>
</feature>
<feature type="transmembrane region" description="Helical" evidence="3">
    <location>
        <begin position="283"/>
        <end position="303"/>
    </location>
</feature>
<feature type="region of interest" description="Disordered" evidence="4">
    <location>
        <begin position="389"/>
        <end position="447"/>
    </location>
</feature>
<feature type="compositionally biased region" description="Acidic residues" evidence="4">
    <location>
        <begin position="426"/>
        <end position="438"/>
    </location>
</feature>
<keyword id="KW-0965">Cell junction</keyword>
<keyword id="KW-1003">Cell membrane</keyword>
<keyword id="KW-0303">Gap junction</keyword>
<keyword id="KW-0407">Ion channel</keyword>
<keyword id="KW-0406">Ion transport</keyword>
<keyword id="KW-0472">Membrane</keyword>
<keyword id="KW-1185">Reference proteome</keyword>
<keyword id="KW-0812">Transmembrane</keyword>
<keyword id="KW-1133">Transmembrane helix</keyword>
<keyword id="KW-0813">Transport</keyword>
<name>INX5_CAEEL</name>
<gene>
    <name type="primary">inx-5</name>
    <name type="synonym">opu-5</name>
    <name type="ORF">R09F10.4</name>
</gene>
<proteinExistence type="inferred from homology"/>
<sequence length="447" mass="51147">MIGVLLPYVRKFQRSAESNDIADRFSYQYTSTLLGFSAIMMAASQYVGRPIQCWVPAQFTRTWEKYAETYCFIKGTYFLPGAFASEGEMSVTSPDDAVTATPQVGYYQWIPIVLVLQAFLFYLPSIIWRTFNESCELKIKELAAVSEASRKIKSNMSDDQVKATKFGRYFFKKLNFRNESPVFKETGSVVASGKFLPALYLLVKILYLANIVLQFWILTYFLETKSWMWGWQTFQDLMAGREWETTGIFPRVTMCDFSIMDLTSVHDHSIQCVIVINMLAEKVYVFFWFWLLFVGLLTVCSLAYWAVIYMLQSVGRNFIYSYLQQTPEFQTEQERGSFVPANFVDKCLTPDGVFISRLVQQNSGDLFTSIMLGEMFSLYRAREAEKAHKKDDDSALPASAPVDLQEDDDDDTPFPPPTKAVAETLTSDDEEEETDVDSPDTTATLPR</sequence>
<comment type="function">
    <text evidence="2">Structural component of the gap junctions.</text>
</comment>
<comment type="subcellular location">
    <subcellularLocation>
        <location evidence="5">Cell membrane</location>
        <topology evidence="3">Multi-pass membrane protein</topology>
    </subcellularLocation>
    <subcellularLocation>
        <location evidence="1">Cell junction</location>
        <location evidence="1">Gap junction</location>
    </subcellularLocation>
</comment>
<comment type="similarity">
    <text evidence="3">Belongs to the pannexin family.</text>
</comment>
<dbReference type="EMBL" id="FO081137">
    <property type="protein sequence ID" value="CCD69417.1"/>
    <property type="molecule type" value="Genomic_DNA"/>
</dbReference>
<dbReference type="PIR" id="G89587">
    <property type="entry name" value="G89587"/>
</dbReference>
<dbReference type="RefSeq" id="NP_509403.2">
    <property type="nucleotide sequence ID" value="NM_077002.5"/>
</dbReference>
<dbReference type="SMR" id="Q23027"/>
<dbReference type="BioGRID" id="46008">
    <property type="interactions" value="1"/>
</dbReference>
<dbReference type="FunCoup" id="Q23027">
    <property type="interactions" value="186"/>
</dbReference>
<dbReference type="STRING" id="6239.R09F10.4.1"/>
<dbReference type="iPTMnet" id="Q23027"/>
<dbReference type="PaxDb" id="6239-R09F10.4"/>
<dbReference type="PeptideAtlas" id="Q23027"/>
<dbReference type="EnsemblMetazoa" id="R09F10.4.1">
    <property type="protein sequence ID" value="R09F10.4.1"/>
    <property type="gene ID" value="WBGene00002127"/>
</dbReference>
<dbReference type="GeneID" id="181086"/>
<dbReference type="KEGG" id="cel:CELE_R09F10.4"/>
<dbReference type="UCSC" id="R09F10.4">
    <property type="organism name" value="c. elegans"/>
</dbReference>
<dbReference type="AGR" id="WB:WBGene00002127"/>
<dbReference type="CTD" id="181086"/>
<dbReference type="WormBase" id="R09F10.4">
    <property type="protein sequence ID" value="CE33811"/>
    <property type="gene ID" value="WBGene00002127"/>
    <property type="gene designation" value="inx-5"/>
</dbReference>
<dbReference type="eggNOG" id="ENOG502QWRS">
    <property type="taxonomic scope" value="Eukaryota"/>
</dbReference>
<dbReference type="HOGENOM" id="CLU_035763_0_1_1"/>
<dbReference type="InParanoid" id="Q23027"/>
<dbReference type="OMA" id="QFTRTWE"/>
<dbReference type="OrthoDB" id="5867527at2759"/>
<dbReference type="PhylomeDB" id="Q23027"/>
<dbReference type="PRO" id="PR:Q23027"/>
<dbReference type="Proteomes" id="UP000001940">
    <property type="component" value="Chromosome X"/>
</dbReference>
<dbReference type="Bgee" id="WBGene00002127">
    <property type="expression patterns" value="Expressed in larva and 3 other cell types or tissues"/>
</dbReference>
<dbReference type="GO" id="GO:0005921">
    <property type="term" value="C:gap junction"/>
    <property type="evidence" value="ECO:0000250"/>
    <property type="project" value="UniProtKB"/>
</dbReference>
<dbReference type="GO" id="GO:0005886">
    <property type="term" value="C:plasma membrane"/>
    <property type="evidence" value="ECO:0000250"/>
    <property type="project" value="UniProtKB"/>
</dbReference>
<dbReference type="GO" id="GO:0005243">
    <property type="term" value="F:gap junction channel activity"/>
    <property type="evidence" value="ECO:0000250"/>
    <property type="project" value="UniProtKB"/>
</dbReference>
<dbReference type="GO" id="GO:0055077">
    <property type="term" value="F:gap junction hemi-channel activity"/>
    <property type="evidence" value="ECO:0000250"/>
    <property type="project" value="UniProtKB"/>
</dbReference>
<dbReference type="GO" id="GO:0034220">
    <property type="term" value="P:monoatomic ion transmembrane transport"/>
    <property type="evidence" value="ECO:0007669"/>
    <property type="project" value="UniProtKB-KW"/>
</dbReference>
<dbReference type="InterPro" id="IPR000990">
    <property type="entry name" value="Innexin"/>
</dbReference>
<dbReference type="PANTHER" id="PTHR11893">
    <property type="entry name" value="INNEXIN"/>
    <property type="match status" value="1"/>
</dbReference>
<dbReference type="PANTHER" id="PTHR11893:SF36">
    <property type="entry name" value="INNEXIN-5"/>
    <property type="match status" value="1"/>
</dbReference>
<dbReference type="Pfam" id="PF00876">
    <property type="entry name" value="Innexin"/>
    <property type="match status" value="1"/>
</dbReference>
<dbReference type="PRINTS" id="PR01262">
    <property type="entry name" value="INNEXIN"/>
</dbReference>
<dbReference type="PROSITE" id="PS51013">
    <property type="entry name" value="PANNEXIN"/>
    <property type="match status" value="1"/>
</dbReference>
<protein>
    <recommendedName>
        <fullName>Innexin-5</fullName>
    </recommendedName>
    <alternativeName>
        <fullName>Protein opu-5</fullName>
    </alternativeName>
</protein>
<organism>
    <name type="scientific">Caenorhabditis elegans</name>
    <dbReference type="NCBI Taxonomy" id="6239"/>
    <lineage>
        <taxon>Eukaryota</taxon>
        <taxon>Metazoa</taxon>
        <taxon>Ecdysozoa</taxon>
        <taxon>Nematoda</taxon>
        <taxon>Chromadorea</taxon>
        <taxon>Rhabditida</taxon>
        <taxon>Rhabditina</taxon>
        <taxon>Rhabditomorpha</taxon>
        <taxon>Rhabditoidea</taxon>
        <taxon>Rhabditidae</taxon>
        <taxon>Peloderinae</taxon>
        <taxon>Caenorhabditis</taxon>
    </lineage>
</organism>